<name>ISPG_RUTMC</name>
<protein>
    <recommendedName>
        <fullName evidence="1">4-hydroxy-3-methylbut-2-en-1-yl diphosphate synthase (flavodoxin)</fullName>
        <ecNumber evidence="1">1.17.7.3</ecNumber>
    </recommendedName>
    <alternativeName>
        <fullName evidence="1">1-hydroxy-2-methyl-2-(E)-butenyl 4-diphosphate synthase</fullName>
    </alternativeName>
</protein>
<gene>
    <name evidence="1" type="primary">ispG</name>
    <name type="ordered locus">Rmag_0384</name>
</gene>
<comment type="function">
    <text evidence="1">Converts 2C-methyl-D-erythritol 2,4-cyclodiphosphate (ME-2,4cPP) into 1-hydroxy-2-methyl-2-(E)-butenyl 4-diphosphate.</text>
</comment>
<comment type="catalytic activity">
    <reaction evidence="1">
        <text>(2E)-4-hydroxy-3-methylbut-2-enyl diphosphate + oxidized [flavodoxin] + H2O + 2 H(+) = 2-C-methyl-D-erythritol 2,4-cyclic diphosphate + reduced [flavodoxin]</text>
        <dbReference type="Rhea" id="RHEA:43604"/>
        <dbReference type="Rhea" id="RHEA-COMP:10622"/>
        <dbReference type="Rhea" id="RHEA-COMP:10623"/>
        <dbReference type="ChEBI" id="CHEBI:15377"/>
        <dbReference type="ChEBI" id="CHEBI:15378"/>
        <dbReference type="ChEBI" id="CHEBI:57618"/>
        <dbReference type="ChEBI" id="CHEBI:58210"/>
        <dbReference type="ChEBI" id="CHEBI:58483"/>
        <dbReference type="ChEBI" id="CHEBI:128753"/>
        <dbReference type="EC" id="1.17.7.3"/>
    </reaction>
</comment>
<comment type="cofactor">
    <cofactor evidence="1">
        <name>[4Fe-4S] cluster</name>
        <dbReference type="ChEBI" id="CHEBI:49883"/>
    </cofactor>
    <text evidence="1">Binds 1 [4Fe-4S] cluster.</text>
</comment>
<comment type="pathway">
    <text evidence="1">Isoprenoid biosynthesis; isopentenyl diphosphate biosynthesis via DXP pathway; isopentenyl diphosphate from 1-deoxy-D-xylulose 5-phosphate: step 5/6.</text>
</comment>
<comment type="similarity">
    <text evidence="1">Belongs to the IspG family.</text>
</comment>
<organism>
    <name type="scientific">Ruthia magnifica subsp. Calyptogena magnifica</name>
    <dbReference type="NCBI Taxonomy" id="413404"/>
    <lineage>
        <taxon>Bacteria</taxon>
        <taxon>Pseudomonadati</taxon>
        <taxon>Pseudomonadota</taxon>
        <taxon>Gammaproteobacteria</taxon>
        <taxon>Candidatus Pseudothioglobaceae</taxon>
        <taxon>Candidatus Ruthturnera</taxon>
    </lineage>
</organism>
<keyword id="KW-0004">4Fe-4S</keyword>
<keyword id="KW-0408">Iron</keyword>
<keyword id="KW-0411">Iron-sulfur</keyword>
<keyword id="KW-0414">Isoprene biosynthesis</keyword>
<keyword id="KW-0479">Metal-binding</keyword>
<keyword id="KW-0560">Oxidoreductase</keyword>
<dbReference type="EC" id="1.17.7.3" evidence="1"/>
<dbReference type="EMBL" id="CP000488">
    <property type="protein sequence ID" value="ABL02153.1"/>
    <property type="molecule type" value="Genomic_DNA"/>
</dbReference>
<dbReference type="RefSeq" id="WP_011737778.1">
    <property type="nucleotide sequence ID" value="NC_008610.1"/>
</dbReference>
<dbReference type="SMR" id="A1AW46"/>
<dbReference type="STRING" id="413404.Rmag_0384"/>
<dbReference type="KEGG" id="rma:Rmag_0384"/>
<dbReference type="eggNOG" id="COG0821">
    <property type="taxonomic scope" value="Bacteria"/>
</dbReference>
<dbReference type="HOGENOM" id="CLU_042258_0_0_6"/>
<dbReference type="OrthoDB" id="9803214at2"/>
<dbReference type="UniPathway" id="UPA00056">
    <property type="reaction ID" value="UER00096"/>
</dbReference>
<dbReference type="Proteomes" id="UP000002587">
    <property type="component" value="Chromosome"/>
</dbReference>
<dbReference type="GO" id="GO:0051539">
    <property type="term" value="F:4 iron, 4 sulfur cluster binding"/>
    <property type="evidence" value="ECO:0007669"/>
    <property type="project" value="UniProtKB-UniRule"/>
</dbReference>
<dbReference type="GO" id="GO:0046429">
    <property type="term" value="F:4-hydroxy-3-methylbut-2-en-1-yl diphosphate synthase activity (ferredoxin)"/>
    <property type="evidence" value="ECO:0007669"/>
    <property type="project" value="UniProtKB-UniRule"/>
</dbReference>
<dbReference type="GO" id="GO:0141197">
    <property type="term" value="F:4-hydroxy-3-methylbut-2-enyl-diphosphate synthase activity (flavodoxin)"/>
    <property type="evidence" value="ECO:0007669"/>
    <property type="project" value="UniProtKB-EC"/>
</dbReference>
<dbReference type="GO" id="GO:0005506">
    <property type="term" value="F:iron ion binding"/>
    <property type="evidence" value="ECO:0007669"/>
    <property type="project" value="InterPro"/>
</dbReference>
<dbReference type="GO" id="GO:0019288">
    <property type="term" value="P:isopentenyl diphosphate biosynthetic process, methylerythritol 4-phosphate pathway"/>
    <property type="evidence" value="ECO:0007669"/>
    <property type="project" value="UniProtKB-UniRule"/>
</dbReference>
<dbReference type="GO" id="GO:0016114">
    <property type="term" value="P:terpenoid biosynthetic process"/>
    <property type="evidence" value="ECO:0007669"/>
    <property type="project" value="InterPro"/>
</dbReference>
<dbReference type="FunFam" id="3.20.20.20:FF:000001">
    <property type="entry name" value="4-hydroxy-3-methylbut-2-en-1-yl diphosphate synthase (flavodoxin)"/>
    <property type="match status" value="1"/>
</dbReference>
<dbReference type="Gene3D" id="3.20.20.20">
    <property type="entry name" value="Dihydropteroate synthase-like"/>
    <property type="match status" value="1"/>
</dbReference>
<dbReference type="Gene3D" id="3.30.413.10">
    <property type="entry name" value="Sulfite Reductase Hemoprotein, domain 1"/>
    <property type="match status" value="1"/>
</dbReference>
<dbReference type="HAMAP" id="MF_00159">
    <property type="entry name" value="IspG"/>
    <property type="match status" value="1"/>
</dbReference>
<dbReference type="InterPro" id="IPR011005">
    <property type="entry name" value="Dihydropteroate_synth-like_sf"/>
</dbReference>
<dbReference type="InterPro" id="IPR016425">
    <property type="entry name" value="IspG_bac"/>
</dbReference>
<dbReference type="InterPro" id="IPR004588">
    <property type="entry name" value="IspG_bac-typ"/>
</dbReference>
<dbReference type="InterPro" id="IPR045854">
    <property type="entry name" value="NO2/SO3_Rdtase_4Fe4S_sf"/>
</dbReference>
<dbReference type="NCBIfam" id="TIGR00612">
    <property type="entry name" value="ispG_gcpE"/>
    <property type="match status" value="1"/>
</dbReference>
<dbReference type="NCBIfam" id="NF001540">
    <property type="entry name" value="PRK00366.1"/>
    <property type="match status" value="1"/>
</dbReference>
<dbReference type="PANTHER" id="PTHR30454">
    <property type="entry name" value="4-HYDROXY-3-METHYLBUT-2-EN-1-YL DIPHOSPHATE SYNTHASE"/>
    <property type="match status" value="1"/>
</dbReference>
<dbReference type="PANTHER" id="PTHR30454:SF0">
    <property type="entry name" value="4-HYDROXY-3-METHYLBUT-2-EN-1-YL DIPHOSPHATE SYNTHASE (FERREDOXIN), CHLOROPLASTIC"/>
    <property type="match status" value="1"/>
</dbReference>
<dbReference type="Pfam" id="PF04551">
    <property type="entry name" value="GcpE"/>
    <property type="match status" value="1"/>
</dbReference>
<dbReference type="PIRSF" id="PIRSF004640">
    <property type="entry name" value="IspG"/>
    <property type="match status" value="1"/>
</dbReference>
<dbReference type="SUPFAM" id="SSF51717">
    <property type="entry name" value="Dihydropteroate synthetase-like"/>
    <property type="match status" value="1"/>
</dbReference>
<dbReference type="SUPFAM" id="SSF56014">
    <property type="entry name" value="Nitrite and sulphite reductase 4Fe-4S domain-like"/>
    <property type="match status" value="1"/>
</dbReference>
<accession>A1AW46</accession>
<sequence length="358" mass="38825">MKPVYIIQRRKSKQVFVGDVAIGGDAPISVQSMTNTETTDVKATVAQIQAIQNAGADLVRVSVPTIDAAEAFKIIKKQVNIPLISDIHFDYKIALKVAEYGADCLRINPGNIGREDRIREVVAAAIDHNIPIRIGVNAGSLEKDLQKKYTEPTPEAMVESAFRQIDILDKLNFDNFKISLKASEIFMTVFAYQQLASQIDNPLHLGITEAGSLRFGTIKSSIGLGLLLSEGIGDTIRISLASDPVDEVRVGFDILKSLNLRSKGVNLIACPSCSRQKFDVIKIVNELESRLEGITAPIDVAVIGCVVNGPGEAKAVSVGLIGGEPNLLYLDGKTHSKITNENLVNELEAQVRNRLKSP</sequence>
<evidence type="ECO:0000255" key="1">
    <source>
        <dbReference type="HAMAP-Rule" id="MF_00159"/>
    </source>
</evidence>
<feature type="chain" id="PRO_1000011512" description="4-hydroxy-3-methylbut-2-en-1-yl diphosphate synthase (flavodoxin)">
    <location>
        <begin position="1"/>
        <end position="358"/>
    </location>
</feature>
<feature type="binding site" evidence="1">
    <location>
        <position position="270"/>
    </location>
    <ligand>
        <name>[4Fe-4S] cluster</name>
        <dbReference type="ChEBI" id="CHEBI:49883"/>
    </ligand>
</feature>
<feature type="binding site" evidence="1">
    <location>
        <position position="273"/>
    </location>
    <ligand>
        <name>[4Fe-4S] cluster</name>
        <dbReference type="ChEBI" id="CHEBI:49883"/>
    </ligand>
</feature>
<feature type="binding site" evidence="1">
    <location>
        <position position="305"/>
    </location>
    <ligand>
        <name>[4Fe-4S] cluster</name>
        <dbReference type="ChEBI" id="CHEBI:49883"/>
    </ligand>
</feature>
<feature type="binding site" evidence="1">
    <location>
        <position position="312"/>
    </location>
    <ligand>
        <name>[4Fe-4S] cluster</name>
        <dbReference type="ChEBI" id="CHEBI:49883"/>
    </ligand>
</feature>
<reference key="1">
    <citation type="journal article" date="2007" name="Science">
        <title>The Calyptogena magnifica chemoautotrophic symbiont genome.</title>
        <authorList>
            <person name="Newton I.L.G."/>
            <person name="Woyke T."/>
            <person name="Auchtung T.A."/>
            <person name="Dilly G.F."/>
            <person name="Dutton R.J."/>
            <person name="Fisher M.C."/>
            <person name="Fontanez K.M."/>
            <person name="Lau E."/>
            <person name="Stewart F.J."/>
            <person name="Richardson P.M."/>
            <person name="Barry K.W."/>
            <person name="Saunders E."/>
            <person name="Detter J.C."/>
            <person name="Wu D."/>
            <person name="Eisen J.A."/>
            <person name="Cavanaugh C.M."/>
        </authorList>
    </citation>
    <scope>NUCLEOTIDE SEQUENCE [LARGE SCALE GENOMIC DNA]</scope>
</reference>
<proteinExistence type="inferred from homology"/>